<keyword id="KW-0414">Isoprene biosynthesis</keyword>
<keyword id="KW-0460">Magnesium</keyword>
<keyword id="KW-0479">Metal-binding</keyword>
<keyword id="KW-0784">Thiamine biosynthesis</keyword>
<keyword id="KW-0786">Thiamine pyrophosphate</keyword>
<keyword id="KW-0808">Transferase</keyword>
<sequence length="629" mass="68008">MLLSELSHPNELHGLTVSQLEEIACQIRERHLQVVSTSGGHLGPGLGVVELTLALYQTLDLDSDRVVWDVGHQGYPHKLITGRFSQFDSLRQQNGVAGYLKRSESKFDHFGAGHASTSISAALGMAIARDRKGENHKCVAVIGDGALTGGMALEAINHAGHLPNTPLVVVLNDNDMSISPPVGALSSYLNKVRLSPPLQFLSDSVQESVKNIPLIGKDIPEELKNIKGSVRRLAVPKVGAVFEELGFTYMGPIDGHDIENLINTFNAAHRLKKPVLVHIVTTKGKGYPYAEADQVGYHAQSAFDLTTGKSIPSKKPKPVSYSKIFGQTLLKICEQDSKVIGITAAMATGTGLDILQKNIPEQYVDVGIAEQHAVTLAAGMSCDGLKPVVAIYSTFLQRAFDQLIHDVGIQNLPVSFVLDRAGIVGADGPTHQGQYDISYMRSIPNFVLMAPKDESELQRMLITSINHKGPTALRIPRGSGLGVAVMDEGWEPLNIGEAEILEEGNDILIIAYGSMVASAIETAEILKGMNINTCIVNARFVKPLDKNLIIPLASRIQKVVTMEEGTLIGGFGSAIVELFNDNEVNIPVYRIGIPDVLVDHASPDQSKEKLGLMPDQMADKIIQKFKLNN</sequence>
<dbReference type="EC" id="2.2.1.7" evidence="1"/>
<dbReference type="EMBL" id="CP000111">
    <property type="protein sequence ID" value="ABB49953.1"/>
    <property type="status" value="ALT_INIT"/>
    <property type="molecule type" value="Genomic_DNA"/>
</dbReference>
<dbReference type="RefSeq" id="WP_011376447.1">
    <property type="nucleotide sequence ID" value="NC_007577.1"/>
</dbReference>
<dbReference type="SMR" id="Q31AZ2"/>
<dbReference type="STRING" id="74546.PMT9312_0893"/>
<dbReference type="KEGG" id="pmi:PMT9312_0893"/>
<dbReference type="eggNOG" id="COG1154">
    <property type="taxonomic scope" value="Bacteria"/>
</dbReference>
<dbReference type="HOGENOM" id="CLU_009227_1_4_3"/>
<dbReference type="OrthoDB" id="9803371at2"/>
<dbReference type="UniPathway" id="UPA00064">
    <property type="reaction ID" value="UER00091"/>
</dbReference>
<dbReference type="Proteomes" id="UP000002715">
    <property type="component" value="Chromosome"/>
</dbReference>
<dbReference type="GO" id="GO:0005829">
    <property type="term" value="C:cytosol"/>
    <property type="evidence" value="ECO:0007669"/>
    <property type="project" value="TreeGrafter"/>
</dbReference>
<dbReference type="GO" id="GO:0008661">
    <property type="term" value="F:1-deoxy-D-xylulose-5-phosphate synthase activity"/>
    <property type="evidence" value="ECO:0007669"/>
    <property type="project" value="UniProtKB-UniRule"/>
</dbReference>
<dbReference type="GO" id="GO:0000287">
    <property type="term" value="F:magnesium ion binding"/>
    <property type="evidence" value="ECO:0007669"/>
    <property type="project" value="UniProtKB-UniRule"/>
</dbReference>
<dbReference type="GO" id="GO:0030976">
    <property type="term" value="F:thiamine pyrophosphate binding"/>
    <property type="evidence" value="ECO:0007669"/>
    <property type="project" value="UniProtKB-UniRule"/>
</dbReference>
<dbReference type="GO" id="GO:0052865">
    <property type="term" value="P:1-deoxy-D-xylulose 5-phosphate biosynthetic process"/>
    <property type="evidence" value="ECO:0007669"/>
    <property type="project" value="UniProtKB-UniPathway"/>
</dbReference>
<dbReference type="GO" id="GO:0019288">
    <property type="term" value="P:isopentenyl diphosphate biosynthetic process, methylerythritol 4-phosphate pathway"/>
    <property type="evidence" value="ECO:0007669"/>
    <property type="project" value="TreeGrafter"/>
</dbReference>
<dbReference type="GO" id="GO:0016114">
    <property type="term" value="P:terpenoid biosynthetic process"/>
    <property type="evidence" value="ECO:0007669"/>
    <property type="project" value="UniProtKB-UniRule"/>
</dbReference>
<dbReference type="GO" id="GO:0009228">
    <property type="term" value="P:thiamine biosynthetic process"/>
    <property type="evidence" value="ECO:0007669"/>
    <property type="project" value="UniProtKB-UniRule"/>
</dbReference>
<dbReference type="CDD" id="cd02007">
    <property type="entry name" value="TPP_DXS"/>
    <property type="match status" value="1"/>
</dbReference>
<dbReference type="CDD" id="cd07033">
    <property type="entry name" value="TPP_PYR_DXS_TK_like"/>
    <property type="match status" value="1"/>
</dbReference>
<dbReference type="FunFam" id="3.40.50.920:FF:000002">
    <property type="entry name" value="1-deoxy-D-xylulose-5-phosphate synthase"/>
    <property type="match status" value="1"/>
</dbReference>
<dbReference type="FunFam" id="3.40.50.970:FF:000005">
    <property type="entry name" value="1-deoxy-D-xylulose-5-phosphate synthase"/>
    <property type="match status" value="1"/>
</dbReference>
<dbReference type="Gene3D" id="3.40.50.920">
    <property type="match status" value="1"/>
</dbReference>
<dbReference type="Gene3D" id="3.40.50.970">
    <property type="match status" value="2"/>
</dbReference>
<dbReference type="HAMAP" id="MF_00315">
    <property type="entry name" value="DXP_synth"/>
    <property type="match status" value="1"/>
</dbReference>
<dbReference type="InterPro" id="IPR005477">
    <property type="entry name" value="Dxylulose-5-P_synthase"/>
</dbReference>
<dbReference type="InterPro" id="IPR029061">
    <property type="entry name" value="THDP-binding"/>
</dbReference>
<dbReference type="InterPro" id="IPR009014">
    <property type="entry name" value="Transketo_C/PFOR_II"/>
</dbReference>
<dbReference type="InterPro" id="IPR005475">
    <property type="entry name" value="Transketolase-like_Pyr-bd"/>
</dbReference>
<dbReference type="InterPro" id="IPR020826">
    <property type="entry name" value="Transketolase_BS"/>
</dbReference>
<dbReference type="InterPro" id="IPR033248">
    <property type="entry name" value="Transketolase_C"/>
</dbReference>
<dbReference type="InterPro" id="IPR049557">
    <property type="entry name" value="Transketolase_CS"/>
</dbReference>
<dbReference type="NCBIfam" id="TIGR00204">
    <property type="entry name" value="dxs"/>
    <property type="match status" value="1"/>
</dbReference>
<dbReference type="NCBIfam" id="NF003933">
    <property type="entry name" value="PRK05444.2-2"/>
    <property type="match status" value="1"/>
</dbReference>
<dbReference type="PANTHER" id="PTHR43322">
    <property type="entry name" value="1-D-DEOXYXYLULOSE 5-PHOSPHATE SYNTHASE-RELATED"/>
    <property type="match status" value="1"/>
</dbReference>
<dbReference type="PANTHER" id="PTHR43322:SF5">
    <property type="entry name" value="1-DEOXY-D-XYLULOSE-5-PHOSPHATE SYNTHASE, CHLOROPLASTIC"/>
    <property type="match status" value="1"/>
</dbReference>
<dbReference type="Pfam" id="PF13292">
    <property type="entry name" value="DXP_synthase_N"/>
    <property type="match status" value="1"/>
</dbReference>
<dbReference type="Pfam" id="PF02779">
    <property type="entry name" value="Transket_pyr"/>
    <property type="match status" value="1"/>
</dbReference>
<dbReference type="Pfam" id="PF02780">
    <property type="entry name" value="Transketolase_C"/>
    <property type="match status" value="1"/>
</dbReference>
<dbReference type="SMART" id="SM00861">
    <property type="entry name" value="Transket_pyr"/>
    <property type="match status" value="1"/>
</dbReference>
<dbReference type="SUPFAM" id="SSF52518">
    <property type="entry name" value="Thiamin diphosphate-binding fold (THDP-binding)"/>
    <property type="match status" value="2"/>
</dbReference>
<dbReference type="SUPFAM" id="SSF52922">
    <property type="entry name" value="TK C-terminal domain-like"/>
    <property type="match status" value="1"/>
</dbReference>
<dbReference type="PROSITE" id="PS00801">
    <property type="entry name" value="TRANSKETOLASE_1"/>
    <property type="match status" value="1"/>
</dbReference>
<dbReference type="PROSITE" id="PS00802">
    <property type="entry name" value="TRANSKETOLASE_2"/>
    <property type="match status" value="1"/>
</dbReference>
<comment type="function">
    <text evidence="1">Catalyzes the acyloin condensation reaction between C atoms 2 and 3 of pyruvate and glyceraldehyde 3-phosphate to yield 1-deoxy-D-xylulose-5-phosphate (DXP).</text>
</comment>
<comment type="catalytic activity">
    <reaction evidence="1">
        <text>D-glyceraldehyde 3-phosphate + pyruvate + H(+) = 1-deoxy-D-xylulose 5-phosphate + CO2</text>
        <dbReference type="Rhea" id="RHEA:12605"/>
        <dbReference type="ChEBI" id="CHEBI:15361"/>
        <dbReference type="ChEBI" id="CHEBI:15378"/>
        <dbReference type="ChEBI" id="CHEBI:16526"/>
        <dbReference type="ChEBI" id="CHEBI:57792"/>
        <dbReference type="ChEBI" id="CHEBI:59776"/>
        <dbReference type="EC" id="2.2.1.7"/>
    </reaction>
</comment>
<comment type="cofactor">
    <cofactor evidence="1">
        <name>Mg(2+)</name>
        <dbReference type="ChEBI" id="CHEBI:18420"/>
    </cofactor>
    <text evidence="1">Binds 1 Mg(2+) ion per subunit.</text>
</comment>
<comment type="cofactor">
    <cofactor evidence="1">
        <name>thiamine diphosphate</name>
        <dbReference type="ChEBI" id="CHEBI:58937"/>
    </cofactor>
    <text evidence="1">Binds 1 thiamine pyrophosphate per subunit.</text>
</comment>
<comment type="pathway">
    <text evidence="1">Metabolic intermediate biosynthesis; 1-deoxy-D-xylulose 5-phosphate biosynthesis; 1-deoxy-D-xylulose 5-phosphate from D-glyceraldehyde 3-phosphate and pyruvate: step 1/1.</text>
</comment>
<comment type="subunit">
    <text evidence="1">Homodimer.</text>
</comment>
<comment type="similarity">
    <text evidence="1">Belongs to the transketolase family. DXPS subfamily.</text>
</comment>
<comment type="sequence caution" evidence="2">
    <conflict type="erroneous initiation">
        <sequence resource="EMBL-CDS" id="ABB49953"/>
    </conflict>
</comment>
<accession>Q31AZ2</accession>
<organism>
    <name type="scientific">Prochlorococcus marinus (strain MIT 9312)</name>
    <dbReference type="NCBI Taxonomy" id="74546"/>
    <lineage>
        <taxon>Bacteria</taxon>
        <taxon>Bacillati</taxon>
        <taxon>Cyanobacteriota</taxon>
        <taxon>Cyanophyceae</taxon>
        <taxon>Synechococcales</taxon>
        <taxon>Prochlorococcaceae</taxon>
        <taxon>Prochlorococcus</taxon>
    </lineage>
</organism>
<proteinExistence type="inferred from homology"/>
<name>DXS_PROM9</name>
<gene>
    <name evidence="1" type="primary">dxs</name>
    <name type="ordered locus">PMT9312_0893</name>
</gene>
<evidence type="ECO:0000255" key="1">
    <source>
        <dbReference type="HAMAP-Rule" id="MF_00315"/>
    </source>
</evidence>
<evidence type="ECO:0000305" key="2"/>
<protein>
    <recommendedName>
        <fullName evidence="1">1-deoxy-D-xylulose-5-phosphate synthase</fullName>
        <ecNumber evidence="1">2.2.1.7</ecNumber>
    </recommendedName>
    <alternativeName>
        <fullName evidence="1">1-deoxyxylulose-5-phosphate synthase</fullName>
        <shortName evidence="1">DXP synthase</shortName>
        <shortName evidence="1">DXPS</shortName>
    </alternativeName>
</protein>
<feature type="chain" id="PRO_0000256456" description="1-deoxy-D-xylulose-5-phosphate synthase">
    <location>
        <begin position="1"/>
        <end position="629"/>
    </location>
</feature>
<feature type="binding site" evidence="1">
    <location>
        <position position="72"/>
    </location>
    <ligand>
        <name>thiamine diphosphate</name>
        <dbReference type="ChEBI" id="CHEBI:58937"/>
    </ligand>
</feature>
<feature type="binding site" evidence="1">
    <location>
        <begin position="113"/>
        <end position="115"/>
    </location>
    <ligand>
        <name>thiamine diphosphate</name>
        <dbReference type="ChEBI" id="CHEBI:58937"/>
    </ligand>
</feature>
<feature type="binding site" evidence="1">
    <location>
        <position position="144"/>
    </location>
    <ligand>
        <name>Mg(2+)</name>
        <dbReference type="ChEBI" id="CHEBI:18420"/>
    </ligand>
</feature>
<feature type="binding site" evidence="1">
    <location>
        <begin position="145"/>
        <end position="146"/>
    </location>
    <ligand>
        <name>thiamine diphosphate</name>
        <dbReference type="ChEBI" id="CHEBI:58937"/>
    </ligand>
</feature>
<feature type="binding site" evidence="1">
    <location>
        <position position="174"/>
    </location>
    <ligand>
        <name>Mg(2+)</name>
        <dbReference type="ChEBI" id="CHEBI:18420"/>
    </ligand>
</feature>
<feature type="binding site" evidence="1">
    <location>
        <position position="174"/>
    </location>
    <ligand>
        <name>thiamine diphosphate</name>
        <dbReference type="ChEBI" id="CHEBI:58937"/>
    </ligand>
</feature>
<feature type="binding site" evidence="1">
    <location>
        <position position="287"/>
    </location>
    <ligand>
        <name>thiamine diphosphate</name>
        <dbReference type="ChEBI" id="CHEBI:58937"/>
    </ligand>
</feature>
<feature type="binding site" evidence="1">
    <location>
        <position position="370"/>
    </location>
    <ligand>
        <name>thiamine diphosphate</name>
        <dbReference type="ChEBI" id="CHEBI:58937"/>
    </ligand>
</feature>
<reference key="1">
    <citation type="journal article" date="2006" name="Science">
        <title>Genomic islands and the ecology and evolution of Prochlorococcus.</title>
        <authorList>
            <person name="Coleman M.L."/>
            <person name="Sullivan M.B."/>
            <person name="Martiny A.C."/>
            <person name="Steglich C."/>
            <person name="Barry K."/>
            <person name="Delong E.F."/>
            <person name="Chisholm S.W."/>
        </authorList>
    </citation>
    <scope>NUCLEOTIDE SEQUENCE [LARGE SCALE GENOMIC DNA]</scope>
    <source>
        <strain>MIT 9312</strain>
    </source>
</reference>